<organism>
    <name type="scientific">Staphylococcus aureus (strain JH9)</name>
    <dbReference type="NCBI Taxonomy" id="359786"/>
    <lineage>
        <taxon>Bacteria</taxon>
        <taxon>Bacillati</taxon>
        <taxon>Bacillota</taxon>
        <taxon>Bacilli</taxon>
        <taxon>Bacillales</taxon>
        <taxon>Staphylococcaceae</taxon>
        <taxon>Staphylococcus</taxon>
    </lineage>
</organism>
<comment type="function">
    <text evidence="1">Catalyzes the NADPH-dependent reduction of glutamyl-tRNA(Glu) to glutamate 1-semialdehyde (GSA).</text>
</comment>
<comment type="catalytic activity">
    <reaction evidence="1">
        <text>(S)-4-amino-5-oxopentanoate + tRNA(Glu) + NADP(+) = L-glutamyl-tRNA(Glu) + NADPH + H(+)</text>
        <dbReference type="Rhea" id="RHEA:12344"/>
        <dbReference type="Rhea" id="RHEA-COMP:9663"/>
        <dbReference type="Rhea" id="RHEA-COMP:9680"/>
        <dbReference type="ChEBI" id="CHEBI:15378"/>
        <dbReference type="ChEBI" id="CHEBI:57501"/>
        <dbReference type="ChEBI" id="CHEBI:57783"/>
        <dbReference type="ChEBI" id="CHEBI:58349"/>
        <dbReference type="ChEBI" id="CHEBI:78442"/>
        <dbReference type="ChEBI" id="CHEBI:78520"/>
        <dbReference type="EC" id="1.2.1.70"/>
    </reaction>
</comment>
<comment type="pathway">
    <text evidence="1">Porphyrin-containing compound metabolism; protoporphyrin-IX biosynthesis; 5-aminolevulinate from L-glutamyl-tRNA(Glu): step 1/2.</text>
</comment>
<comment type="subunit">
    <text evidence="1">Homodimer.</text>
</comment>
<comment type="domain">
    <text evidence="1">Possesses an unusual extended V-shaped dimeric structure with each monomer consisting of three distinct domains arranged along a curved 'spinal' alpha-helix. The N-terminal catalytic domain specifically recognizes the glutamate moiety of the substrate. The second domain is the NADPH-binding domain, and the third C-terminal domain is responsible for dimerization.</text>
</comment>
<comment type="miscellaneous">
    <text evidence="1">During catalysis, the active site Cys acts as a nucleophile attacking the alpha-carbonyl group of tRNA-bound glutamate with the formation of a thioester intermediate between enzyme and glutamate, and the concomitant release of tRNA(Glu). The thioester intermediate is finally reduced by direct hydride transfer from NADPH, to form the product GSA.</text>
</comment>
<comment type="similarity">
    <text evidence="1">Belongs to the glutamyl-tRNA reductase family.</text>
</comment>
<keyword id="KW-0521">NADP</keyword>
<keyword id="KW-0560">Oxidoreductase</keyword>
<keyword id="KW-0627">Porphyrin biosynthesis</keyword>
<dbReference type="EC" id="1.2.1.70" evidence="1"/>
<dbReference type="EMBL" id="CP000703">
    <property type="protein sequence ID" value="ABQ49520.1"/>
    <property type="molecule type" value="Genomic_DNA"/>
</dbReference>
<dbReference type="RefSeq" id="WP_000545451.1">
    <property type="nucleotide sequence ID" value="NC_009487.1"/>
</dbReference>
<dbReference type="SMR" id="A5ITJ7"/>
<dbReference type="KEGG" id="saj:SaurJH9_1730"/>
<dbReference type="HOGENOM" id="CLU_035113_2_2_9"/>
<dbReference type="UniPathway" id="UPA00251">
    <property type="reaction ID" value="UER00316"/>
</dbReference>
<dbReference type="GO" id="GO:0008883">
    <property type="term" value="F:glutamyl-tRNA reductase activity"/>
    <property type="evidence" value="ECO:0007669"/>
    <property type="project" value="UniProtKB-UniRule"/>
</dbReference>
<dbReference type="GO" id="GO:0050661">
    <property type="term" value="F:NADP binding"/>
    <property type="evidence" value="ECO:0007669"/>
    <property type="project" value="InterPro"/>
</dbReference>
<dbReference type="GO" id="GO:0006782">
    <property type="term" value="P:protoporphyrinogen IX biosynthetic process"/>
    <property type="evidence" value="ECO:0007669"/>
    <property type="project" value="UniProtKB-UniRule"/>
</dbReference>
<dbReference type="CDD" id="cd05213">
    <property type="entry name" value="NAD_bind_Glutamyl_tRNA_reduct"/>
    <property type="match status" value="1"/>
</dbReference>
<dbReference type="FunFam" id="3.30.460.30:FF:000001">
    <property type="entry name" value="Glutamyl-tRNA reductase"/>
    <property type="match status" value="1"/>
</dbReference>
<dbReference type="FunFam" id="3.40.50.720:FF:000031">
    <property type="entry name" value="Glutamyl-tRNA reductase"/>
    <property type="match status" value="1"/>
</dbReference>
<dbReference type="Gene3D" id="3.30.460.30">
    <property type="entry name" value="Glutamyl-tRNA reductase, N-terminal domain"/>
    <property type="match status" value="1"/>
</dbReference>
<dbReference type="Gene3D" id="3.40.50.720">
    <property type="entry name" value="NAD(P)-binding Rossmann-like Domain"/>
    <property type="match status" value="1"/>
</dbReference>
<dbReference type="HAMAP" id="MF_00087">
    <property type="entry name" value="Glu_tRNA_reductase"/>
    <property type="match status" value="1"/>
</dbReference>
<dbReference type="InterPro" id="IPR000343">
    <property type="entry name" value="4pyrrol_synth_GluRdtase"/>
</dbReference>
<dbReference type="InterPro" id="IPR015896">
    <property type="entry name" value="4pyrrol_synth_GluRdtase_dimer"/>
</dbReference>
<dbReference type="InterPro" id="IPR015895">
    <property type="entry name" value="4pyrrol_synth_GluRdtase_N"/>
</dbReference>
<dbReference type="InterPro" id="IPR018214">
    <property type="entry name" value="GluRdtase_CS"/>
</dbReference>
<dbReference type="InterPro" id="IPR036453">
    <property type="entry name" value="GluRdtase_dimer_dom_sf"/>
</dbReference>
<dbReference type="InterPro" id="IPR036343">
    <property type="entry name" value="GluRdtase_N_sf"/>
</dbReference>
<dbReference type="InterPro" id="IPR036291">
    <property type="entry name" value="NAD(P)-bd_dom_sf"/>
</dbReference>
<dbReference type="InterPro" id="IPR006151">
    <property type="entry name" value="Shikm_DH/Glu-tRNA_Rdtase"/>
</dbReference>
<dbReference type="NCBIfam" id="TIGR01035">
    <property type="entry name" value="hemA"/>
    <property type="match status" value="1"/>
</dbReference>
<dbReference type="PANTHER" id="PTHR43120">
    <property type="entry name" value="GLUTAMYL-TRNA REDUCTASE 1, CHLOROPLASTIC"/>
    <property type="match status" value="1"/>
</dbReference>
<dbReference type="PANTHER" id="PTHR43120:SF1">
    <property type="entry name" value="GLUTAMYL-TRNA REDUCTASE 1, CHLOROPLASTIC"/>
    <property type="match status" value="1"/>
</dbReference>
<dbReference type="Pfam" id="PF00745">
    <property type="entry name" value="GlutR_dimer"/>
    <property type="match status" value="1"/>
</dbReference>
<dbReference type="Pfam" id="PF05201">
    <property type="entry name" value="GlutR_N"/>
    <property type="match status" value="1"/>
</dbReference>
<dbReference type="Pfam" id="PF01488">
    <property type="entry name" value="Shikimate_DH"/>
    <property type="match status" value="1"/>
</dbReference>
<dbReference type="PIRSF" id="PIRSF000445">
    <property type="entry name" value="4pyrrol_synth_GluRdtase"/>
    <property type="match status" value="1"/>
</dbReference>
<dbReference type="SUPFAM" id="SSF69742">
    <property type="entry name" value="Glutamyl tRNA-reductase catalytic, N-terminal domain"/>
    <property type="match status" value="1"/>
</dbReference>
<dbReference type="SUPFAM" id="SSF69075">
    <property type="entry name" value="Glutamyl tRNA-reductase dimerization domain"/>
    <property type="match status" value="1"/>
</dbReference>
<dbReference type="SUPFAM" id="SSF51735">
    <property type="entry name" value="NAD(P)-binding Rossmann-fold domains"/>
    <property type="match status" value="1"/>
</dbReference>
<dbReference type="PROSITE" id="PS00747">
    <property type="entry name" value="GLUTR"/>
    <property type="match status" value="1"/>
</dbReference>
<evidence type="ECO:0000255" key="1">
    <source>
        <dbReference type="HAMAP-Rule" id="MF_00087"/>
    </source>
</evidence>
<proteinExistence type="inferred from homology"/>
<reference key="1">
    <citation type="submission" date="2007-05" db="EMBL/GenBank/DDBJ databases">
        <title>Complete sequence of chromosome of Staphylococcus aureus subsp. aureus JH9.</title>
        <authorList>
            <consortium name="US DOE Joint Genome Institute"/>
            <person name="Copeland A."/>
            <person name="Lucas S."/>
            <person name="Lapidus A."/>
            <person name="Barry K."/>
            <person name="Detter J.C."/>
            <person name="Glavina del Rio T."/>
            <person name="Hammon N."/>
            <person name="Israni S."/>
            <person name="Pitluck S."/>
            <person name="Chain P."/>
            <person name="Malfatti S."/>
            <person name="Shin M."/>
            <person name="Vergez L."/>
            <person name="Schmutz J."/>
            <person name="Larimer F."/>
            <person name="Land M."/>
            <person name="Hauser L."/>
            <person name="Kyrpides N."/>
            <person name="Kim E."/>
            <person name="Tomasz A."/>
            <person name="Richardson P."/>
        </authorList>
    </citation>
    <scope>NUCLEOTIDE SEQUENCE [LARGE SCALE GENOMIC DNA]</scope>
    <source>
        <strain>JH9</strain>
    </source>
</reference>
<gene>
    <name evidence="1" type="primary">hemA</name>
    <name type="ordered locus">SaurJH9_1730</name>
</gene>
<accession>A5ITJ7</accession>
<feature type="chain" id="PRO_1000075429" description="Glutamyl-tRNA reductase">
    <location>
        <begin position="1"/>
        <end position="448"/>
    </location>
</feature>
<feature type="active site" description="Nucleophile" evidence="1">
    <location>
        <position position="50"/>
    </location>
</feature>
<feature type="binding site" evidence="1">
    <location>
        <begin position="49"/>
        <end position="52"/>
    </location>
    <ligand>
        <name>substrate</name>
    </ligand>
</feature>
<feature type="binding site" evidence="1">
    <location>
        <position position="109"/>
    </location>
    <ligand>
        <name>substrate</name>
    </ligand>
</feature>
<feature type="binding site" evidence="1">
    <location>
        <begin position="114"/>
        <end position="116"/>
    </location>
    <ligand>
        <name>substrate</name>
    </ligand>
</feature>
<feature type="binding site" evidence="1">
    <location>
        <position position="120"/>
    </location>
    <ligand>
        <name>substrate</name>
    </ligand>
</feature>
<feature type="binding site" evidence="1">
    <location>
        <begin position="189"/>
        <end position="194"/>
    </location>
    <ligand>
        <name>NADP(+)</name>
        <dbReference type="ChEBI" id="CHEBI:58349"/>
    </ligand>
</feature>
<feature type="site" description="Important for activity" evidence="1">
    <location>
        <position position="99"/>
    </location>
</feature>
<protein>
    <recommendedName>
        <fullName evidence="1">Glutamyl-tRNA reductase</fullName>
        <shortName evidence="1">GluTR</shortName>
        <ecNumber evidence="1">1.2.1.70</ecNumber>
    </recommendedName>
</protein>
<sequence>MHFIAISINHRTADVALREQVAFRDDALRIAHEDLYETKSILENVILSTCNRTEVYAVVDQIHTGRYYIQRFLARAFGFEVDDIKAMSEVKVGDEAVEHLLRVTSGLDSIVLGETQILGQIRDAFFLAQSTGTTGTIFNHLFKQAITFAKRAHNETDIADNAVSVSYAAVELAKKVFGKLKSKQAIIIGAGEMSELSLLNLLGSGITDITVVNRTIENAMKLAAKHQVKYDELSSLPNLLESADIVISSTSAQSYIITNEMIERIAENRKQDSLVLIDIAVPRDIEPGISAITNIFNYDVDDLKGLVDANLRERQLAAATISEQIPAEIHAHNEWISMLGVVPVIRALREKAMAIQAETMDSIDRKLPGLSERERKIISKHTKSIINQMLKDPIKQAKELSSDKKSNEKLELFQNIFDIEAECPHEQAKQQKESKVKEISARRIFSFE</sequence>
<name>HEM1_STAA9</name>